<accession>Q1I585</accession>
<reference key="1">
    <citation type="journal article" date="2006" name="Nat. Biotechnol.">
        <title>Complete genome sequence of the entomopathogenic and metabolically versatile soil bacterium Pseudomonas entomophila.</title>
        <authorList>
            <person name="Vodovar N."/>
            <person name="Vallenet D."/>
            <person name="Cruveiller S."/>
            <person name="Rouy Z."/>
            <person name="Barbe V."/>
            <person name="Acosta C."/>
            <person name="Cattolico L."/>
            <person name="Jubin C."/>
            <person name="Lajus A."/>
            <person name="Segurens B."/>
            <person name="Vacherie B."/>
            <person name="Wincker P."/>
            <person name="Weissenbach J."/>
            <person name="Lemaitre B."/>
            <person name="Medigue C."/>
            <person name="Boccard F."/>
        </authorList>
    </citation>
    <scope>NUCLEOTIDE SEQUENCE [LARGE SCALE GENOMIC DNA]</scope>
    <source>
        <strain>L48</strain>
    </source>
</reference>
<keyword id="KW-0067">ATP-binding</keyword>
<keyword id="KW-0547">Nucleotide-binding</keyword>
<keyword id="KW-0548">Nucleotidyltransferase</keyword>
<keyword id="KW-0808">Transferase</keyword>
<name>CYSD_PSEE4</name>
<dbReference type="EC" id="2.7.7.4" evidence="1"/>
<dbReference type="EMBL" id="CT573326">
    <property type="protein sequence ID" value="CAK17200.1"/>
    <property type="molecule type" value="Genomic_DNA"/>
</dbReference>
<dbReference type="RefSeq" id="WP_011535568.1">
    <property type="nucleotide sequence ID" value="NC_008027.1"/>
</dbReference>
<dbReference type="SMR" id="Q1I585"/>
<dbReference type="STRING" id="384676.PSEEN4518"/>
<dbReference type="GeneID" id="58770041"/>
<dbReference type="KEGG" id="pen:PSEEN4518"/>
<dbReference type="eggNOG" id="COG0175">
    <property type="taxonomic scope" value="Bacteria"/>
</dbReference>
<dbReference type="HOGENOM" id="CLU_043026_0_0_6"/>
<dbReference type="OrthoDB" id="9772604at2"/>
<dbReference type="UniPathway" id="UPA00140">
    <property type="reaction ID" value="UER00204"/>
</dbReference>
<dbReference type="Proteomes" id="UP000000658">
    <property type="component" value="Chromosome"/>
</dbReference>
<dbReference type="GO" id="GO:0005524">
    <property type="term" value="F:ATP binding"/>
    <property type="evidence" value="ECO:0007669"/>
    <property type="project" value="UniProtKB-KW"/>
</dbReference>
<dbReference type="GO" id="GO:0004781">
    <property type="term" value="F:sulfate adenylyltransferase (ATP) activity"/>
    <property type="evidence" value="ECO:0007669"/>
    <property type="project" value="UniProtKB-UniRule"/>
</dbReference>
<dbReference type="GO" id="GO:0070814">
    <property type="term" value="P:hydrogen sulfide biosynthetic process"/>
    <property type="evidence" value="ECO:0007669"/>
    <property type="project" value="UniProtKB-UniRule"/>
</dbReference>
<dbReference type="GO" id="GO:0000103">
    <property type="term" value="P:sulfate assimilation"/>
    <property type="evidence" value="ECO:0007669"/>
    <property type="project" value="UniProtKB-UniRule"/>
</dbReference>
<dbReference type="CDD" id="cd23946">
    <property type="entry name" value="Sulfate_adenylyltransferase_2"/>
    <property type="match status" value="1"/>
</dbReference>
<dbReference type="FunFam" id="3.40.50.620:FF:000002">
    <property type="entry name" value="Sulfate adenylyltransferase subunit 2"/>
    <property type="match status" value="1"/>
</dbReference>
<dbReference type="Gene3D" id="3.40.50.620">
    <property type="entry name" value="HUPs"/>
    <property type="match status" value="1"/>
</dbReference>
<dbReference type="HAMAP" id="MF_00064">
    <property type="entry name" value="Sulf_adenylyltr_sub2"/>
    <property type="match status" value="1"/>
</dbReference>
<dbReference type="InterPro" id="IPR002500">
    <property type="entry name" value="PAPS_reduct_dom"/>
</dbReference>
<dbReference type="InterPro" id="IPR014729">
    <property type="entry name" value="Rossmann-like_a/b/a_fold"/>
</dbReference>
<dbReference type="InterPro" id="IPR011784">
    <property type="entry name" value="SO4_adenylTrfase_ssu"/>
</dbReference>
<dbReference type="InterPro" id="IPR050128">
    <property type="entry name" value="Sulfate_adenylyltrnsfr_sub2"/>
</dbReference>
<dbReference type="NCBIfam" id="TIGR02039">
    <property type="entry name" value="CysD"/>
    <property type="match status" value="1"/>
</dbReference>
<dbReference type="NCBIfam" id="NF003587">
    <property type="entry name" value="PRK05253.1"/>
    <property type="match status" value="1"/>
</dbReference>
<dbReference type="NCBIfam" id="NF009214">
    <property type="entry name" value="PRK12563.1"/>
    <property type="match status" value="1"/>
</dbReference>
<dbReference type="PANTHER" id="PTHR43196">
    <property type="entry name" value="SULFATE ADENYLYLTRANSFERASE SUBUNIT 2"/>
    <property type="match status" value="1"/>
</dbReference>
<dbReference type="PANTHER" id="PTHR43196:SF1">
    <property type="entry name" value="SULFATE ADENYLYLTRANSFERASE SUBUNIT 2"/>
    <property type="match status" value="1"/>
</dbReference>
<dbReference type="Pfam" id="PF01507">
    <property type="entry name" value="PAPS_reduct"/>
    <property type="match status" value="1"/>
</dbReference>
<dbReference type="PIRSF" id="PIRSF002936">
    <property type="entry name" value="CysDAde_trans"/>
    <property type="match status" value="1"/>
</dbReference>
<dbReference type="SUPFAM" id="SSF52402">
    <property type="entry name" value="Adenine nucleotide alpha hydrolases-like"/>
    <property type="match status" value="1"/>
</dbReference>
<proteinExistence type="inferred from homology"/>
<sequence length="305" mass="35339">MVDNLTHLKQLEAESIHIIREVAAEFDNPVMLYSIGKDSAVMLHLARKAFFPGKLPFPVMHVDTQWKFQEMYRFRDKMVEEMGLELITHVNPEGVAQGINPFTHGSSKHTDIMKTQGLKQALDKHGFDAAFGGARRDEEKSRAKERVYSFRDSKHRWDPKNQRPELWNIYNGKVNKGESIRVFPLSNWTELDIWQYIYLEGIPIVPLYFAAEREVIEKNGTLIMIDDERILEHLSDEEKARIVKKKVRFRTLGCYPLTGAVESEAETLTDIIQEMLLTRTSERQGRVIDHDGAGSMEDKKRQGYF</sequence>
<feature type="chain" id="PRO_1000008968" description="Sulfate adenylyltransferase subunit 2">
    <location>
        <begin position="1"/>
        <end position="305"/>
    </location>
</feature>
<comment type="function">
    <text evidence="1">With CysN forms the ATP sulfurylase (ATPS) that catalyzes the adenylation of sulfate producing adenosine 5'-phosphosulfate (APS) and diphosphate, the first enzymatic step in sulfur assimilation pathway. APS synthesis involves the formation of a high-energy phosphoric-sulfuric acid anhydride bond driven by GTP hydrolysis by CysN coupled to ATP hydrolysis by CysD.</text>
</comment>
<comment type="catalytic activity">
    <reaction evidence="1">
        <text>sulfate + ATP + H(+) = adenosine 5'-phosphosulfate + diphosphate</text>
        <dbReference type="Rhea" id="RHEA:18133"/>
        <dbReference type="ChEBI" id="CHEBI:15378"/>
        <dbReference type="ChEBI" id="CHEBI:16189"/>
        <dbReference type="ChEBI" id="CHEBI:30616"/>
        <dbReference type="ChEBI" id="CHEBI:33019"/>
        <dbReference type="ChEBI" id="CHEBI:58243"/>
        <dbReference type="EC" id="2.7.7.4"/>
    </reaction>
</comment>
<comment type="pathway">
    <text evidence="1">Sulfur metabolism; hydrogen sulfide biosynthesis; sulfite from sulfate: step 1/3.</text>
</comment>
<comment type="subunit">
    <text evidence="1">Heterodimer composed of CysD, the smaller subunit, and CysN.</text>
</comment>
<comment type="similarity">
    <text evidence="1">Belongs to the PAPS reductase family. CysD subfamily.</text>
</comment>
<protein>
    <recommendedName>
        <fullName evidence="1">Sulfate adenylyltransferase subunit 2</fullName>
        <ecNumber evidence="1">2.7.7.4</ecNumber>
    </recommendedName>
    <alternativeName>
        <fullName evidence="1">ATP-sulfurylase small subunit</fullName>
    </alternativeName>
    <alternativeName>
        <fullName evidence="1">Sulfate adenylate transferase</fullName>
        <shortName evidence="1">SAT</shortName>
    </alternativeName>
</protein>
<evidence type="ECO:0000255" key="1">
    <source>
        <dbReference type="HAMAP-Rule" id="MF_00064"/>
    </source>
</evidence>
<gene>
    <name evidence="1" type="primary">cysD</name>
    <name type="ordered locus">PSEEN4518</name>
</gene>
<organism>
    <name type="scientific">Pseudomonas entomophila (strain L48)</name>
    <dbReference type="NCBI Taxonomy" id="384676"/>
    <lineage>
        <taxon>Bacteria</taxon>
        <taxon>Pseudomonadati</taxon>
        <taxon>Pseudomonadota</taxon>
        <taxon>Gammaproteobacteria</taxon>
        <taxon>Pseudomonadales</taxon>
        <taxon>Pseudomonadaceae</taxon>
        <taxon>Pseudomonas</taxon>
    </lineage>
</organism>